<protein>
    <recommendedName>
        <fullName evidence="1">Regulator of sigma D</fullName>
    </recommendedName>
</protein>
<feature type="chain" id="PRO_1000138190" description="Regulator of sigma D">
    <location>
        <begin position="1"/>
        <end position="158"/>
    </location>
</feature>
<proteinExistence type="inferred from homology"/>
<comment type="function">
    <text evidence="1">Binds RpoD and negatively regulates RpoD-mediated transcription activation by preventing the interaction between the primary sigma factor RpoD with the catalytic core of the RNA polymerase and with promoter DNA. May be involved in replacement of the RNA polymerase sigma subunit from RpoD to RpoS during the transition from exponential growth to the stationary phase.</text>
</comment>
<comment type="subunit">
    <text evidence="1">Interacts with RpoD.</text>
</comment>
<comment type="subcellular location">
    <subcellularLocation>
        <location evidence="1">Cytoplasm</location>
    </subcellularLocation>
</comment>
<comment type="similarity">
    <text evidence="1">Belongs to the Rsd/AlgQ family.</text>
</comment>
<evidence type="ECO:0000255" key="1">
    <source>
        <dbReference type="HAMAP-Rule" id="MF_01181"/>
    </source>
</evidence>
<gene>
    <name evidence="1" type="primary">rsd</name>
    <name type="ordered locus">ECIAI39_4385</name>
</gene>
<sequence length="158" mass="18243">MLNQLDNLTERVRGSNKLVDRWLHVRKHLLVAYYNLVGIKPGKESYMRLNEKALDDFCQSLVDYLSAGHFSIYERILHKLEGNGQLARAAKIWPQLEANTQQIMDYYDSSLETAIDHDNYLEFQQVLSDIGEALEARFVLEDKLILLVLDAARVKHPA</sequence>
<organism>
    <name type="scientific">Escherichia coli O7:K1 (strain IAI39 / ExPEC)</name>
    <dbReference type="NCBI Taxonomy" id="585057"/>
    <lineage>
        <taxon>Bacteria</taxon>
        <taxon>Pseudomonadati</taxon>
        <taxon>Pseudomonadota</taxon>
        <taxon>Gammaproteobacteria</taxon>
        <taxon>Enterobacterales</taxon>
        <taxon>Enterobacteriaceae</taxon>
        <taxon>Escherichia</taxon>
    </lineage>
</organism>
<dbReference type="EMBL" id="CU928164">
    <property type="protein sequence ID" value="CAR20491.1"/>
    <property type="molecule type" value="Genomic_DNA"/>
</dbReference>
<dbReference type="RefSeq" id="WP_000934302.1">
    <property type="nucleotide sequence ID" value="NC_011750.1"/>
</dbReference>
<dbReference type="RefSeq" id="YP_002410259.1">
    <property type="nucleotide sequence ID" value="NC_011750.1"/>
</dbReference>
<dbReference type="SMR" id="B7NRS8"/>
<dbReference type="STRING" id="585057.ECIAI39_4385"/>
<dbReference type="GeneID" id="75205513"/>
<dbReference type="KEGG" id="ect:ECIAI39_4385"/>
<dbReference type="PATRIC" id="fig|585057.6.peg.4531"/>
<dbReference type="HOGENOM" id="CLU_142729_0_0_6"/>
<dbReference type="Proteomes" id="UP000000749">
    <property type="component" value="Chromosome"/>
</dbReference>
<dbReference type="GO" id="GO:0005737">
    <property type="term" value="C:cytoplasm"/>
    <property type="evidence" value="ECO:0007669"/>
    <property type="project" value="UniProtKB-SubCell"/>
</dbReference>
<dbReference type="GO" id="GO:0006355">
    <property type="term" value="P:regulation of DNA-templated transcription"/>
    <property type="evidence" value="ECO:0007669"/>
    <property type="project" value="InterPro"/>
</dbReference>
<dbReference type="FunFam" id="1.20.120.1370:FF:000001">
    <property type="entry name" value="Regulator of sigma D"/>
    <property type="match status" value="1"/>
</dbReference>
<dbReference type="Gene3D" id="1.20.120.1370">
    <property type="entry name" value="Regulator of RNA polymerase sigma(70) subunit, domain 4"/>
    <property type="match status" value="1"/>
</dbReference>
<dbReference type="HAMAP" id="MF_01181">
    <property type="entry name" value="Rsd"/>
    <property type="match status" value="1"/>
</dbReference>
<dbReference type="InterPro" id="IPR038309">
    <property type="entry name" value="Rsd/AlgQ_sf"/>
</dbReference>
<dbReference type="InterPro" id="IPR023785">
    <property type="entry name" value="Sigma70_reg_Rsd"/>
</dbReference>
<dbReference type="InterPro" id="IPR007448">
    <property type="entry name" value="Sigma70_reg_Rsd_AlgQ"/>
</dbReference>
<dbReference type="NCBIfam" id="NF008723">
    <property type="entry name" value="PRK11718.1"/>
    <property type="match status" value="1"/>
</dbReference>
<dbReference type="Pfam" id="PF04353">
    <property type="entry name" value="Rsd_AlgQ"/>
    <property type="match status" value="1"/>
</dbReference>
<dbReference type="PIRSF" id="PIRSF016548">
    <property type="entry name" value="Rsd_AlgQ"/>
    <property type="match status" value="1"/>
</dbReference>
<reference key="1">
    <citation type="journal article" date="2009" name="PLoS Genet.">
        <title>Organised genome dynamics in the Escherichia coli species results in highly diverse adaptive paths.</title>
        <authorList>
            <person name="Touchon M."/>
            <person name="Hoede C."/>
            <person name="Tenaillon O."/>
            <person name="Barbe V."/>
            <person name="Baeriswyl S."/>
            <person name="Bidet P."/>
            <person name="Bingen E."/>
            <person name="Bonacorsi S."/>
            <person name="Bouchier C."/>
            <person name="Bouvet O."/>
            <person name="Calteau A."/>
            <person name="Chiapello H."/>
            <person name="Clermont O."/>
            <person name="Cruveiller S."/>
            <person name="Danchin A."/>
            <person name="Diard M."/>
            <person name="Dossat C."/>
            <person name="Karoui M.E."/>
            <person name="Frapy E."/>
            <person name="Garry L."/>
            <person name="Ghigo J.M."/>
            <person name="Gilles A.M."/>
            <person name="Johnson J."/>
            <person name="Le Bouguenec C."/>
            <person name="Lescat M."/>
            <person name="Mangenot S."/>
            <person name="Martinez-Jehanne V."/>
            <person name="Matic I."/>
            <person name="Nassif X."/>
            <person name="Oztas S."/>
            <person name="Petit M.A."/>
            <person name="Pichon C."/>
            <person name="Rouy Z."/>
            <person name="Ruf C.S."/>
            <person name="Schneider D."/>
            <person name="Tourret J."/>
            <person name="Vacherie B."/>
            <person name="Vallenet D."/>
            <person name="Medigue C."/>
            <person name="Rocha E.P.C."/>
            <person name="Denamur E."/>
        </authorList>
    </citation>
    <scope>NUCLEOTIDE SEQUENCE [LARGE SCALE GENOMIC DNA]</scope>
    <source>
        <strain>IAI39 / ExPEC</strain>
    </source>
</reference>
<accession>B7NRS8</accession>
<keyword id="KW-0963">Cytoplasm</keyword>
<keyword id="KW-0804">Transcription</keyword>
<keyword id="KW-0805">Transcription regulation</keyword>
<name>RSD_ECO7I</name>